<protein>
    <recommendedName>
        <fullName evidence="1">Sulfur carrier protein TusA</fullName>
    </recommendedName>
</protein>
<evidence type="ECO:0000255" key="1">
    <source>
        <dbReference type="HAMAP-Rule" id="MF_00413"/>
    </source>
</evidence>
<evidence type="ECO:0000305" key="2"/>
<proteinExistence type="inferred from homology"/>
<keyword id="KW-0963">Cytoplasm</keyword>
<reference key="1">
    <citation type="journal article" date="2005" name="J. Bacteriol.">
        <title>Genomic sequence of an otitis media isolate of nontypeable Haemophilus influenzae: comparative study with H. influenzae serotype d, strain KW20.</title>
        <authorList>
            <person name="Harrison A."/>
            <person name="Dyer D.W."/>
            <person name="Gillaspy A."/>
            <person name="Ray W.C."/>
            <person name="Mungur R."/>
            <person name="Carson M.B."/>
            <person name="Zhong H."/>
            <person name="Gipson J."/>
            <person name="Gipson M."/>
            <person name="Johnson L.S."/>
            <person name="Lewis L."/>
            <person name="Bakaletz L.O."/>
            <person name="Munson R.S. Jr."/>
        </authorList>
    </citation>
    <scope>NUCLEOTIDE SEQUENCE [LARGE SCALE GENOMIC DNA]</scope>
    <source>
        <strain>86-028NP</strain>
    </source>
</reference>
<name>TUSA_HAEI8</name>
<organism>
    <name type="scientific">Haemophilus influenzae (strain 86-028NP)</name>
    <dbReference type="NCBI Taxonomy" id="281310"/>
    <lineage>
        <taxon>Bacteria</taxon>
        <taxon>Pseudomonadati</taxon>
        <taxon>Pseudomonadota</taxon>
        <taxon>Gammaproteobacteria</taxon>
        <taxon>Pasteurellales</taxon>
        <taxon>Pasteurellaceae</taxon>
        <taxon>Haemophilus</taxon>
    </lineage>
</organism>
<gene>
    <name evidence="1" type="primary">tusA</name>
    <name type="ordered locus">NTHI0853</name>
</gene>
<feature type="chain" id="PRO_0000159039" description="Sulfur carrier protein TusA">
    <location>
        <begin position="1"/>
        <end position="79"/>
    </location>
</feature>
<feature type="active site" description="Cysteine persulfide intermediate" evidence="1">
    <location>
        <position position="17"/>
    </location>
</feature>
<accession>Q4QMJ8</accession>
<dbReference type="EMBL" id="CP000057">
    <property type="protein sequence ID" value="AAX87749.1"/>
    <property type="status" value="ALT_INIT"/>
    <property type="molecule type" value="Genomic_DNA"/>
</dbReference>
<dbReference type="RefSeq" id="WP_005665561.1">
    <property type="nucleotide sequence ID" value="NC_007146.2"/>
</dbReference>
<dbReference type="SMR" id="Q4QMJ8"/>
<dbReference type="GeneID" id="93219721"/>
<dbReference type="KEGG" id="hit:NTHI0853"/>
<dbReference type="HOGENOM" id="CLU_165255_5_0_6"/>
<dbReference type="Proteomes" id="UP000002525">
    <property type="component" value="Chromosome"/>
</dbReference>
<dbReference type="GO" id="GO:0005737">
    <property type="term" value="C:cytoplasm"/>
    <property type="evidence" value="ECO:0007669"/>
    <property type="project" value="UniProtKB-SubCell"/>
</dbReference>
<dbReference type="GO" id="GO:0097163">
    <property type="term" value="F:sulfur carrier activity"/>
    <property type="evidence" value="ECO:0007669"/>
    <property type="project" value="UniProtKB-UniRule"/>
</dbReference>
<dbReference type="GO" id="GO:0002143">
    <property type="term" value="P:tRNA wobble position uridine thiolation"/>
    <property type="evidence" value="ECO:0007669"/>
    <property type="project" value="InterPro"/>
</dbReference>
<dbReference type="Gene3D" id="3.30.110.40">
    <property type="entry name" value="TusA-like domain"/>
    <property type="match status" value="1"/>
</dbReference>
<dbReference type="HAMAP" id="MF_00413">
    <property type="entry name" value="Thiourid_synth_A"/>
    <property type="match status" value="1"/>
</dbReference>
<dbReference type="InterPro" id="IPR022931">
    <property type="entry name" value="Sulphur_carrier_TusA"/>
</dbReference>
<dbReference type="InterPro" id="IPR001455">
    <property type="entry name" value="TusA-like"/>
</dbReference>
<dbReference type="InterPro" id="IPR036868">
    <property type="entry name" value="TusA-like_sf"/>
</dbReference>
<dbReference type="NCBIfam" id="NF001423">
    <property type="entry name" value="PRK00299.1"/>
    <property type="match status" value="1"/>
</dbReference>
<dbReference type="PANTHER" id="PTHR33279:SF2">
    <property type="entry name" value="SULFUR CARRIER PROTEIN TUSA"/>
    <property type="match status" value="1"/>
</dbReference>
<dbReference type="PANTHER" id="PTHR33279">
    <property type="entry name" value="SULFUR CARRIER PROTEIN YEDF-RELATED"/>
    <property type="match status" value="1"/>
</dbReference>
<dbReference type="Pfam" id="PF01206">
    <property type="entry name" value="TusA"/>
    <property type="match status" value="1"/>
</dbReference>
<dbReference type="SUPFAM" id="SSF64307">
    <property type="entry name" value="SirA-like"/>
    <property type="match status" value="1"/>
</dbReference>
<dbReference type="PROSITE" id="PS01148">
    <property type="entry name" value="UPF0033"/>
    <property type="match status" value="1"/>
</dbReference>
<comment type="function">
    <text evidence="1">Sulfur carrier protein which probably makes part of a sulfur-relay system.</text>
</comment>
<comment type="subcellular location">
    <subcellularLocation>
        <location evidence="1">Cytoplasm</location>
    </subcellularLocation>
</comment>
<comment type="similarity">
    <text evidence="1">Belongs to the sulfur carrier protein TusA family.</text>
</comment>
<comment type="sequence caution" evidence="2">
    <conflict type="erroneous initiation">
        <sequence resource="EMBL-CDS" id="AAX87749"/>
    </conflict>
</comment>
<sequence>MSEISVTQTLNTLGLRCPEPVMLVRKNIRHLNDGEILLIIADDPATTRDIPSFCQFMDHTLLQSEVEKPPFKYWVKRGK</sequence>